<feature type="chain" id="PRO_1000130374" description="Protein FdhE">
    <location>
        <begin position="1"/>
        <end position="309"/>
    </location>
</feature>
<evidence type="ECO:0000255" key="1">
    <source>
        <dbReference type="HAMAP-Rule" id="MF_00611"/>
    </source>
</evidence>
<name>FDHE_SHIB3</name>
<sequence length="309" mass="34747">MSIRIIPQDELGSSEKRTADMIPPLLFPRLKNLYNRRAERLRELAENNPLDDYLRFAALIAHAQEVVLYDHPLEMDLTARIKEASAQGKPPLDIHVLPRDKHWQKLLMALIAELKPEMSGPALAVIENLEKASTQELEDMASALFASDFSSVSSDKAPFIWAALSLYWAQMANLIPGKARAEYGEQRQYCPVCGSMPVSSMVQIGTTQGLRYLHCNLCETEWHVVRVKCSNCEQSGKLHYWSLDDEQAAIKAESCDDCGTYLKILYQEKEPKVEAVADDLASLVLDARMEQEGYARSSINPFLFPGEGE</sequence>
<reference key="1">
    <citation type="submission" date="2008-05" db="EMBL/GenBank/DDBJ databases">
        <title>Complete sequence of Shigella boydii serotype 18 strain BS512.</title>
        <authorList>
            <person name="Rasko D.A."/>
            <person name="Rosovitz M."/>
            <person name="Maurelli A.T."/>
            <person name="Myers G."/>
            <person name="Seshadri R."/>
            <person name="Cer R."/>
            <person name="Jiang L."/>
            <person name="Ravel J."/>
            <person name="Sebastian Y."/>
        </authorList>
    </citation>
    <scope>NUCLEOTIDE SEQUENCE [LARGE SCALE GENOMIC DNA]</scope>
    <source>
        <strain>CDC 3083-94 / BS512</strain>
    </source>
</reference>
<organism>
    <name type="scientific">Shigella boydii serotype 18 (strain CDC 3083-94 / BS512)</name>
    <dbReference type="NCBI Taxonomy" id="344609"/>
    <lineage>
        <taxon>Bacteria</taxon>
        <taxon>Pseudomonadati</taxon>
        <taxon>Pseudomonadota</taxon>
        <taxon>Gammaproteobacteria</taxon>
        <taxon>Enterobacterales</taxon>
        <taxon>Enterobacteriaceae</taxon>
        <taxon>Shigella</taxon>
    </lineage>
</organism>
<proteinExistence type="inferred from homology"/>
<protein>
    <recommendedName>
        <fullName evidence="1">Protein FdhE</fullName>
    </recommendedName>
</protein>
<gene>
    <name evidence="1" type="primary">fdhE</name>
    <name type="ordered locus">SbBS512_E4370</name>
</gene>
<comment type="function">
    <text evidence="1">Necessary for formate dehydrogenase activity.</text>
</comment>
<comment type="subcellular location">
    <subcellularLocation>
        <location evidence="1">Cytoplasm</location>
    </subcellularLocation>
</comment>
<comment type="similarity">
    <text evidence="1">Belongs to the FdhE family.</text>
</comment>
<accession>B2TVN6</accession>
<dbReference type="EMBL" id="CP001063">
    <property type="protein sequence ID" value="ACD07524.1"/>
    <property type="molecule type" value="Genomic_DNA"/>
</dbReference>
<dbReference type="RefSeq" id="WP_000027697.1">
    <property type="nucleotide sequence ID" value="NC_010658.1"/>
</dbReference>
<dbReference type="SMR" id="B2TVN6"/>
<dbReference type="STRING" id="344609.SbBS512_E4370"/>
<dbReference type="KEGG" id="sbc:SbBS512_E4370"/>
<dbReference type="HOGENOM" id="CLU_055275_0_0_6"/>
<dbReference type="Proteomes" id="UP000001030">
    <property type="component" value="Chromosome"/>
</dbReference>
<dbReference type="GO" id="GO:0005829">
    <property type="term" value="C:cytosol"/>
    <property type="evidence" value="ECO:0007669"/>
    <property type="project" value="TreeGrafter"/>
</dbReference>
<dbReference type="GO" id="GO:0008199">
    <property type="term" value="F:ferric iron binding"/>
    <property type="evidence" value="ECO:0007669"/>
    <property type="project" value="TreeGrafter"/>
</dbReference>
<dbReference type="GO" id="GO:0051604">
    <property type="term" value="P:protein maturation"/>
    <property type="evidence" value="ECO:0007669"/>
    <property type="project" value="TreeGrafter"/>
</dbReference>
<dbReference type="CDD" id="cd16341">
    <property type="entry name" value="FdhE"/>
    <property type="match status" value="1"/>
</dbReference>
<dbReference type="FunFam" id="3.90.1670.10:FF:000001">
    <property type="entry name" value="Protein FdhE"/>
    <property type="match status" value="1"/>
</dbReference>
<dbReference type="Gene3D" id="3.90.1670.10">
    <property type="entry name" value="FdhE-like domain"/>
    <property type="match status" value="1"/>
</dbReference>
<dbReference type="HAMAP" id="MF_00611">
    <property type="entry name" value="FdeH"/>
    <property type="match status" value="1"/>
</dbReference>
<dbReference type="InterPro" id="IPR024064">
    <property type="entry name" value="FdhE-like_sf"/>
</dbReference>
<dbReference type="InterPro" id="IPR056796">
    <property type="entry name" value="FdhE_C"/>
</dbReference>
<dbReference type="InterPro" id="IPR056797">
    <property type="entry name" value="FdhE_central"/>
</dbReference>
<dbReference type="InterPro" id="IPR056774">
    <property type="entry name" value="FdhE_N"/>
</dbReference>
<dbReference type="InterPro" id="IPR006452">
    <property type="entry name" value="Formate_DH_accessory"/>
</dbReference>
<dbReference type="NCBIfam" id="TIGR01562">
    <property type="entry name" value="FdhE"/>
    <property type="match status" value="1"/>
</dbReference>
<dbReference type="NCBIfam" id="NF002925">
    <property type="entry name" value="PRK03564.1"/>
    <property type="match status" value="1"/>
</dbReference>
<dbReference type="PANTHER" id="PTHR37689">
    <property type="entry name" value="PROTEIN FDHE"/>
    <property type="match status" value="1"/>
</dbReference>
<dbReference type="PANTHER" id="PTHR37689:SF1">
    <property type="entry name" value="PROTEIN FDHE"/>
    <property type="match status" value="1"/>
</dbReference>
<dbReference type="Pfam" id="PF24860">
    <property type="entry name" value="FdhE_C"/>
    <property type="match status" value="1"/>
</dbReference>
<dbReference type="Pfam" id="PF24859">
    <property type="entry name" value="FdhE_central"/>
    <property type="match status" value="1"/>
</dbReference>
<dbReference type="Pfam" id="PF04216">
    <property type="entry name" value="FdhE_N"/>
    <property type="match status" value="1"/>
</dbReference>
<dbReference type="PIRSF" id="PIRSF018296">
    <property type="entry name" value="Format_dh_formtn"/>
    <property type="match status" value="1"/>
</dbReference>
<dbReference type="SUPFAM" id="SSF144020">
    <property type="entry name" value="FdhE-like"/>
    <property type="match status" value="1"/>
</dbReference>
<keyword id="KW-0963">Cytoplasm</keyword>
<keyword id="KW-1185">Reference proteome</keyword>